<comment type="function">
    <text evidence="2">Acts as a negative regulator of abscisic acid (ABA) response during germination through the ubiquitin-mediated proteolysis of ABI5/DPBF1.</text>
</comment>
<comment type="subunit">
    <text evidence="2">Forms a homodimer and heterodimer with AFP1 and AFP3. Interacts with ABI5/DPBF1, DPBF2, AREB3/DPBF3, EEL/DPBF4, ABF1, ABF3/DPBF5 and ABF4/AREB2.</text>
</comment>
<comment type="subcellular location">
    <subcellularLocation>
        <location evidence="2">Nucleus</location>
    </subcellularLocation>
</comment>
<comment type="induction">
    <text evidence="2">Up-regulated by abscisic acid (ABA), glucose and salt.</text>
</comment>
<comment type="disruption phenotype">
    <text evidence="2">Exhibits hypersensitivity to salt, glucose and osmotic stress and slight hypersensitivity to abscisic acid (ABA).</text>
</comment>
<comment type="similarity">
    <text evidence="3">Belongs to the Ninja family.</text>
</comment>
<proteinExistence type="evidence at protein level"/>
<dbReference type="EMBL" id="AC027656">
    <property type="protein sequence ID" value="AAF81300.1"/>
    <property type="molecule type" value="Genomic_DNA"/>
</dbReference>
<dbReference type="EMBL" id="CP002684">
    <property type="protein sequence ID" value="AEE29062.1"/>
    <property type="molecule type" value="Genomic_DNA"/>
</dbReference>
<dbReference type="EMBL" id="AY056326">
    <property type="protein sequence ID" value="AAL07175.1"/>
    <property type="molecule type" value="mRNA"/>
</dbReference>
<dbReference type="EMBL" id="BT024887">
    <property type="protein sequence ID" value="ABD85158.1"/>
    <property type="molecule type" value="mRNA"/>
</dbReference>
<dbReference type="PIR" id="G86270">
    <property type="entry name" value="G86270"/>
</dbReference>
<dbReference type="RefSeq" id="NP_563933.1">
    <property type="nucleotide sequence ID" value="NM_101242.3"/>
</dbReference>
<dbReference type="BioGRID" id="23174">
    <property type="interactions" value="13"/>
</dbReference>
<dbReference type="DIP" id="DIP-58589N"/>
<dbReference type="FunCoup" id="Q9LMX5">
    <property type="interactions" value="295"/>
</dbReference>
<dbReference type="IntAct" id="Q9LMX5">
    <property type="interactions" value="11"/>
</dbReference>
<dbReference type="STRING" id="3702.Q9LMX5"/>
<dbReference type="iPTMnet" id="Q9LMX5"/>
<dbReference type="PaxDb" id="3702-AT1G13740.1"/>
<dbReference type="ProteomicsDB" id="244682"/>
<dbReference type="EnsemblPlants" id="AT1G13740.1">
    <property type="protein sequence ID" value="AT1G13740.1"/>
    <property type="gene ID" value="AT1G13740"/>
</dbReference>
<dbReference type="GeneID" id="837934"/>
<dbReference type="Gramene" id="AT1G13740.1">
    <property type="protein sequence ID" value="AT1G13740.1"/>
    <property type="gene ID" value="AT1G13740"/>
</dbReference>
<dbReference type="KEGG" id="ath:AT1G13740"/>
<dbReference type="Araport" id="AT1G13740"/>
<dbReference type="TAIR" id="AT1G13740">
    <property type="gene designation" value="AFP2"/>
</dbReference>
<dbReference type="eggNOG" id="ENOG502QW6K">
    <property type="taxonomic scope" value="Eukaryota"/>
</dbReference>
<dbReference type="HOGENOM" id="CLU_034695_0_0_1"/>
<dbReference type="InParanoid" id="Q9LMX5"/>
<dbReference type="OMA" id="AWNREMT"/>
<dbReference type="OrthoDB" id="667358at2759"/>
<dbReference type="PhylomeDB" id="Q9LMX5"/>
<dbReference type="PRO" id="PR:Q9LMX5"/>
<dbReference type="Proteomes" id="UP000006548">
    <property type="component" value="Chromosome 1"/>
</dbReference>
<dbReference type="ExpressionAtlas" id="Q9LMX5">
    <property type="expression patterns" value="baseline and differential"/>
</dbReference>
<dbReference type="GO" id="GO:0005634">
    <property type="term" value="C:nucleus"/>
    <property type="evidence" value="ECO:0000314"/>
    <property type="project" value="TAIR"/>
</dbReference>
<dbReference type="GO" id="GO:0009737">
    <property type="term" value="P:response to abscisic acid"/>
    <property type="evidence" value="ECO:0000315"/>
    <property type="project" value="TAIR"/>
</dbReference>
<dbReference type="GO" id="GO:0009414">
    <property type="term" value="P:response to water deprivation"/>
    <property type="evidence" value="ECO:0000315"/>
    <property type="project" value="TAIR"/>
</dbReference>
<dbReference type="GO" id="GO:0007165">
    <property type="term" value="P:signal transduction"/>
    <property type="evidence" value="ECO:0007669"/>
    <property type="project" value="InterPro"/>
</dbReference>
<dbReference type="InterPro" id="IPR031307">
    <property type="entry name" value="Ninja_fam"/>
</dbReference>
<dbReference type="InterPro" id="IPR012463">
    <property type="entry name" value="Ninja_motif"/>
</dbReference>
<dbReference type="InterPro" id="IPR032310">
    <property type="entry name" value="NLS_NINJA_AFP-like"/>
</dbReference>
<dbReference type="InterPro" id="IPR032308">
    <property type="entry name" value="TDBD"/>
</dbReference>
<dbReference type="PANTHER" id="PTHR31413">
    <property type="entry name" value="AFP HOMOLOG 2"/>
    <property type="match status" value="1"/>
</dbReference>
<dbReference type="PANTHER" id="PTHR31413:SF20">
    <property type="entry name" value="NINJA-FAMILY PROTEIN AFP2"/>
    <property type="match status" value="1"/>
</dbReference>
<dbReference type="Pfam" id="PF07897">
    <property type="entry name" value="EAR"/>
    <property type="match status" value="1"/>
</dbReference>
<dbReference type="Pfam" id="PF16136">
    <property type="entry name" value="NLS_NINJA_AFP"/>
    <property type="match status" value="1"/>
</dbReference>
<dbReference type="Pfam" id="PF16135">
    <property type="entry name" value="TDBD"/>
    <property type="match status" value="1"/>
</dbReference>
<protein>
    <recommendedName>
        <fullName>Ninja-family protein AFP2</fullName>
    </recommendedName>
    <alternativeName>
        <fullName>ABI five-binding protein 2</fullName>
        <shortName>ABI5-binding protein 2</shortName>
    </alternativeName>
</protein>
<organism>
    <name type="scientific">Arabidopsis thaliana</name>
    <name type="common">Mouse-ear cress</name>
    <dbReference type="NCBI Taxonomy" id="3702"/>
    <lineage>
        <taxon>Eukaryota</taxon>
        <taxon>Viridiplantae</taxon>
        <taxon>Streptophyta</taxon>
        <taxon>Embryophyta</taxon>
        <taxon>Tracheophyta</taxon>
        <taxon>Spermatophyta</taxon>
        <taxon>Magnoliopsida</taxon>
        <taxon>eudicotyledons</taxon>
        <taxon>Gunneridae</taxon>
        <taxon>Pentapetalae</taxon>
        <taxon>rosids</taxon>
        <taxon>malvids</taxon>
        <taxon>Brassicales</taxon>
        <taxon>Brassicaceae</taxon>
        <taxon>Camelineae</taxon>
        <taxon>Arabidopsis</taxon>
    </lineage>
</organism>
<accession>Q9LMX5</accession>
<accession>Q93ZQ8</accession>
<sequence>MGEASRQQRAWNREMTVTTNLSLDIDKYPRDLLRGFMSENGGGRVFHGGETNCDDESTIELNLGLSLGGRFGVDKTPRKLKRSSSVLDTVPFNDSTVAEPENYTVGLERTTSLPAEMEEEWRKRKEMQSLRRMEAKRRRCEKQSFRVGNSDDQTVSFENERWVTASKSGFLQRHLVSSNRQVCGVDSDGGGATGGGSSSSLSELDNKNQQGSSNSCNDERSPKIVAGCSSNSGSQGTERPSVTRANKVNENENEKRVRSEDSVDRKGKGMATSTGLVDMPCVFTKGDGPNGRRVDGILYKYGKGEEVRIMCICHGSFLTPAEFVKHGGGGDVDRPLRHIVVNTSSSTF</sequence>
<name>AFP2_ARATH</name>
<keyword id="KW-0539">Nucleus</keyword>
<keyword id="KW-1185">Reference proteome</keyword>
<evidence type="ECO:0000256" key="1">
    <source>
        <dbReference type="SAM" id="MobiDB-lite"/>
    </source>
</evidence>
<evidence type="ECO:0000269" key="2">
    <source>
    </source>
</evidence>
<evidence type="ECO:0000305" key="3"/>
<gene>
    <name type="primary">AFP2</name>
    <name type="ordered locus">At1g13740</name>
    <name type="ORF">F21F23.17</name>
</gene>
<feature type="chain" id="PRO_0000369615" description="Ninja-family protein AFP2">
    <location>
        <begin position="1"/>
        <end position="348"/>
    </location>
</feature>
<feature type="region of interest" description="Disordered" evidence="1">
    <location>
        <begin position="186"/>
        <end position="272"/>
    </location>
</feature>
<feature type="compositionally biased region" description="Gly residues" evidence="1">
    <location>
        <begin position="187"/>
        <end position="197"/>
    </location>
</feature>
<feature type="compositionally biased region" description="Polar residues" evidence="1">
    <location>
        <begin position="207"/>
        <end position="216"/>
    </location>
</feature>
<feature type="compositionally biased region" description="Polar residues" evidence="1">
    <location>
        <begin position="228"/>
        <end position="244"/>
    </location>
</feature>
<feature type="compositionally biased region" description="Basic and acidic residues" evidence="1">
    <location>
        <begin position="247"/>
        <end position="267"/>
    </location>
</feature>
<feature type="sequence conflict" description="In Ref. 3; AAL07175." evidence="3" ref="3">
    <original>S</original>
    <variation>I</variation>
    <location>
        <position position="197"/>
    </location>
</feature>
<reference key="1">
    <citation type="journal article" date="2000" name="Nature">
        <title>Sequence and analysis of chromosome 1 of the plant Arabidopsis thaliana.</title>
        <authorList>
            <person name="Theologis A."/>
            <person name="Ecker J.R."/>
            <person name="Palm C.J."/>
            <person name="Federspiel N.A."/>
            <person name="Kaul S."/>
            <person name="White O."/>
            <person name="Alonso J."/>
            <person name="Altafi H."/>
            <person name="Araujo R."/>
            <person name="Bowman C.L."/>
            <person name="Brooks S.Y."/>
            <person name="Buehler E."/>
            <person name="Chan A."/>
            <person name="Chao Q."/>
            <person name="Chen H."/>
            <person name="Cheuk R.F."/>
            <person name="Chin C.W."/>
            <person name="Chung M.K."/>
            <person name="Conn L."/>
            <person name="Conway A.B."/>
            <person name="Conway A.R."/>
            <person name="Creasy T.H."/>
            <person name="Dewar K."/>
            <person name="Dunn P."/>
            <person name="Etgu P."/>
            <person name="Feldblyum T.V."/>
            <person name="Feng J.-D."/>
            <person name="Fong B."/>
            <person name="Fujii C.Y."/>
            <person name="Gill J.E."/>
            <person name="Goldsmith A.D."/>
            <person name="Haas B."/>
            <person name="Hansen N.F."/>
            <person name="Hughes B."/>
            <person name="Huizar L."/>
            <person name="Hunter J.L."/>
            <person name="Jenkins J."/>
            <person name="Johnson-Hopson C."/>
            <person name="Khan S."/>
            <person name="Khaykin E."/>
            <person name="Kim C.J."/>
            <person name="Koo H.L."/>
            <person name="Kremenetskaia I."/>
            <person name="Kurtz D.B."/>
            <person name="Kwan A."/>
            <person name="Lam B."/>
            <person name="Langin-Hooper S."/>
            <person name="Lee A."/>
            <person name="Lee J.M."/>
            <person name="Lenz C.A."/>
            <person name="Li J.H."/>
            <person name="Li Y.-P."/>
            <person name="Lin X."/>
            <person name="Liu S.X."/>
            <person name="Liu Z.A."/>
            <person name="Luros J.S."/>
            <person name="Maiti R."/>
            <person name="Marziali A."/>
            <person name="Militscher J."/>
            <person name="Miranda M."/>
            <person name="Nguyen M."/>
            <person name="Nierman W.C."/>
            <person name="Osborne B.I."/>
            <person name="Pai G."/>
            <person name="Peterson J."/>
            <person name="Pham P.K."/>
            <person name="Rizzo M."/>
            <person name="Rooney T."/>
            <person name="Rowley D."/>
            <person name="Sakano H."/>
            <person name="Salzberg S.L."/>
            <person name="Schwartz J.R."/>
            <person name="Shinn P."/>
            <person name="Southwick A.M."/>
            <person name="Sun H."/>
            <person name="Tallon L.J."/>
            <person name="Tambunga G."/>
            <person name="Toriumi M.J."/>
            <person name="Town C.D."/>
            <person name="Utterback T."/>
            <person name="Van Aken S."/>
            <person name="Vaysberg M."/>
            <person name="Vysotskaia V.S."/>
            <person name="Walker M."/>
            <person name="Wu D."/>
            <person name="Yu G."/>
            <person name="Fraser C.M."/>
            <person name="Venter J.C."/>
            <person name="Davis R.W."/>
        </authorList>
    </citation>
    <scope>NUCLEOTIDE SEQUENCE [LARGE SCALE GENOMIC DNA]</scope>
    <source>
        <strain>cv. Columbia</strain>
    </source>
</reference>
<reference key="2">
    <citation type="journal article" date="2017" name="Plant J.">
        <title>Araport11: a complete reannotation of the Arabidopsis thaliana reference genome.</title>
        <authorList>
            <person name="Cheng C.Y."/>
            <person name="Krishnakumar V."/>
            <person name="Chan A.P."/>
            <person name="Thibaud-Nissen F."/>
            <person name="Schobel S."/>
            <person name="Town C.D."/>
        </authorList>
    </citation>
    <scope>GENOME REANNOTATION</scope>
    <source>
        <strain>cv. Columbia</strain>
    </source>
</reference>
<reference key="3">
    <citation type="journal article" date="2003" name="Science">
        <title>Empirical analysis of transcriptional activity in the Arabidopsis genome.</title>
        <authorList>
            <person name="Yamada K."/>
            <person name="Lim J."/>
            <person name="Dale J.M."/>
            <person name="Chen H."/>
            <person name="Shinn P."/>
            <person name="Palm C.J."/>
            <person name="Southwick A.M."/>
            <person name="Wu H.C."/>
            <person name="Kim C.J."/>
            <person name="Nguyen M."/>
            <person name="Pham P.K."/>
            <person name="Cheuk R.F."/>
            <person name="Karlin-Newmann G."/>
            <person name="Liu S.X."/>
            <person name="Lam B."/>
            <person name="Sakano H."/>
            <person name="Wu T."/>
            <person name="Yu G."/>
            <person name="Miranda M."/>
            <person name="Quach H.L."/>
            <person name="Tripp M."/>
            <person name="Chang C.H."/>
            <person name="Lee J.M."/>
            <person name="Toriumi M.J."/>
            <person name="Chan M.M."/>
            <person name="Tang C.C."/>
            <person name="Onodera C.S."/>
            <person name="Deng J.M."/>
            <person name="Akiyama K."/>
            <person name="Ansari Y."/>
            <person name="Arakawa T."/>
            <person name="Banh J."/>
            <person name="Banno F."/>
            <person name="Bowser L."/>
            <person name="Brooks S.Y."/>
            <person name="Carninci P."/>
            <person name="Chao Q."/>
            <person name="Choy N."/>
            <person name="Enju A."/>
            <person name="Goldsmith A.D."/>
            <person name="Gurjal M."/>
            <person name="Hansen N.F."/>
            <person name="Hayashizaki Y."/>
            <person name="Johnson-Hopson C."/>
            <person name="Hsuan V.W."/>
            <person name="Iida K."/>
            <person name="Karnes M."/>
            <person name="Khan S."/>
            <person name="Koesema E."/>
            <person name="Ishida J."/>
            <person name="Jiang P.X."/>
            <person name="Jones T."/>
            <person name="Kawai J."/>
            <person name="Kamiya A."/>
            <person name="Meyers C."/>
            <person name="Nakajima M."/>
            <person name="Narusaka M."/>
            <person name="Seki M."/>
            <person name="Sakurai T."/>
            <person name="Satou M."/>
            <person name="Tamse R."/>
            <person name="Vaysberg M."/>
            <person name="Wallender E.K."/>
            <person name="Wong C."/>
            <person name="Yamamura Y."/>
            <person name="Yuan S."/>
            <person name="Shinozaki K."/>
            <person name="Davis R.W."/>
            <person name="Theologis A."/>
            <person name="Ecker J.R."/>
        </authorList>
    </citation>
    <scope>NUCLEOTIDE SEQUENCE [LARGE SCALE MRNA]</scope>
    <source>
        <strain>cv. Columbia</strain>
    </source>
</reference>
<reference key="4">
    <citation type="submission" date="2006-03" db="EMBL/GenBank/DDBJ databases">
        <title>Arabidopsis ORF clones.</title>
        <authorList>
            <person name="Shinn P."/>
            <person name="Chen H."/>
            <person name="Kim C.J."/>
            <person name="Ecker J.R."/>
        </authorList>
    </citation>
    <scope>NUCLEOTIDE SEQUENCE [LARGE SCALE MRNA]</scope>
    <source>
        <strain>cv. Columbia</strain>
    </source>
</reference>
<reference key="5">
    <citation type="journal article" date="2008" name="Plant Mol. Biol.">
        <title>A small plant-specific protein family of ABI five binding proteins (AFPs) regulates stress response in germinating Arabidopsis seeds and seedlings.</title>
        <authorList>
            <person name="Garcia M.E."/>
            <person name="Lynch T.J."/>
            <person name="Peeters J."/>
            <person name="Snowden C."/>
            <person name="Finkelstein R.R."/>
        </authorList>
    </citation>
    <scope>GENE FAMILY</scope>
    <scope>NOMENCLATURE</scope>
    <scope>FUNCTION</scope>
    <scope>SUBUNIT</scope>
    <scope>INTERACTION WITH ABI5/DPBF1; DPBF2; AREB3/DPBF3; EEL/DPBF4; ABF1; ABF3/DPBF5 AND ABF4/AREB2</scope>
    <scope>INDUCTION</scope>
    <scope>SUBCELLULAR LOCATION</scope>
    <scope>DISRUPTION PHENOTYPE</scope>
</reference>